<proteinExistence type="inferred from homology"/>
<sequence length="114" mass="11783">YEKIGAEMVKEVAKKTDDVAGDGTTTATVLAQALVKEGLRNVAAGANPLGLKRGIEKAVEKVTETLLKSAKEVETKEQIAATAAISAGEQSIGDLIAEAMDKVGNEGVITVEES</sequence>
<evidence type="ECO:0000255" key="1">
    <source>
        <dbReference type="HAMAP-Rule" id="MF_00600"/>
    </source>
</evidence>
<evidence type="ECO:0000305" key="2"/>
<name>CH60_MYCUL</name>
<comment type="function">
    <text evidence="1">Together with its co-chaperonin GroES, plays an essential role in assisting protein folding. The GroEL-GroES system forms a nano-cage that allows encapsulation of the non-native substrate proteins and provides a physical environment optimized to promote and accelerate protein folding.</text>
</comment>
<comment type="catalytic activity">
    <reaction evidence="1">
        <text>ATP + H2O + a folded polypeptide = ADP + phosphate + an unfolded polypeptide.</text>
        <dbReference type="EC" id="5.6.1.7"/>
    </reaction>
</comment>
<comment type="subunit">
    <text evidence="1">Forms a cylinder of 14 subunits composed of two heptameric rings stacked back-to-back. Interacts with the co-chaperonin GroES.</text>
</comment>
<comment type="subcellular location">
    <subcellularLocation>
        <location evidence="1">Cytoplasm</location>
    </subcellularLocation>
</comment>
<comment type="similarity">
    <text evidence="1 2">Belongs to the chaperonin (HSP60) family.</text>
</comment>
<dbReference type="EC" id="5.6.1.7" evidence="1"/>
<dbReference type="EMBL" id="U34034">
    <property type="protein sequence ID" value="AAA76695.1"/>
    <property type="molecule type" value="Genomic_DNA"/>
</dbReference>
<dbReference type="SMR" id="Q50826"/>
<dbReference type="GO" id="GO:0005737">
    <property type="term" value="C:cytoplasm"/>
    <property type="evidence" value="ECO:0007669"/>
    <property type="project" value="UniProtKB-SubCell"/>
</dbReference>
<dbReference type="GO" id="GO:0005524">
    <property type="term" value="F:ATP binding"/>
    <property type="evidence" value="ECO:0007669"/>
    <property type="project" value="UniProtKB-KW"/>
</dbReference>
<dbReference type="GO" id="GO:0140662">
    <property type="term" value="F:ATP-dependent protein folding chaperone"/>
    <property type="evidence" value="ECO:0007669"/>
    <property type="project" value="InterPro"/>
</dbReference>
<dbReference type="GO" id="GO:0016853">
    <property type="term" value="F:isomerase activity"/>
    <property type="evidence" value="ECO:0007669"/>
    <property type="project" value="UniProtKB-KW"/>
</dbReference>
<dbReference type="GO" id="GO:0042026">
    <property type="term" value="P:protein refolding"/>
    <property type="evidence" value="ECO:0007669"/>
    <property type="project" value="InterPro"/>
</dbReference>
<dbReference type="Gene3D" id="1.10.560.10">
    <property type="entry name" value="GroEL-like equatorial domain"/>
    <property type="match status" value="1"/>
</dbReference>
<dbReference type="Gene3D" id="3.30.260.10">
    <property type="entry name" value="TCP-1-like chaperonin intermediate domain"/>
    <property type="match status" value="1"/>
</dbReference>
<dbReference type="InterPro" id="IPR001844">
    <property type="entry name" value="Cpn60/GroEL"/>
</dbReference>
<dbReference type="InterPro" id="IPR002423">
    <property type="entry name" value="Cpn60/GroEL/TCP-1"/>
</dbReference>
<dbReference type="InterPro" id="IPR027413">
    <property type="entry name" value="GROEL-like_equatorial_sf"/>
</dbReference>
<dbReference type="InterPro" id="IPR027410">
    <property type="entry name" value="TCP-1-like_intermed_sf"/>
</dbReference>
<dbReference type="PANTHER" id="PTHR45633">
    <property type="entry name" value="60 KDA HEAT SHOCK PROTEIN, MITOCHONDRIAL"/>
    <property type="match status" value="1"/>
</dbReference>
<dbReference type="Pfam" id="PF00118">
    <property type="entry name" value="Cpn60_TCP1"/>
    <property type="match status" value="1"/>
</dbReference>
<dbReference type="SUPFAM" id="SSF48592">
    <property type="entry name" value="GroEL equatorial domain-like"/>
    <property type="match status" value="1"/>
</dbReference>
<gene>
    <name evidence="1" type="primary">groEL</name>
    <name evidence="1" type="synonym">groL</name>
    <name type="synonym">mopA</name>
</gene>
<keyword id="KW-0067">ATP-binding</keyword>
<keyword id="KW-0143">Chaperone</keyword>
<keyword id="KW-0963">Cytoplasm</keyword>
<keyword id="KW-0413">Isomerase</keyword>
<keyword id="KW-0547">Nucleotide-binding</keyword>
<keyword id="KW-0346">Stress response</keyword>
<reference key="1">
    <citation type="submission" date="1995-09" db="EMBL/GenBank/DDBJ databases">
        <authorList>
            <person name="Roberts B.L."/>
            <person name="Hirst R.G."/>
        </authorList>
    </citation>
    <scope>NUCLEOTIDE SEQUENCE [GENOMIC DNA]</scope>
</reference>
<feature type="chain" id="PRO_0000063453" description="Chaperonin GroEL">
    <location>
        <begin position="1" status="less than"/>
        <end position="114" status="greater than"/>
    </location>
</feature>
<feature type="binding site" evidence="1">
    <location>
        <begin position="22"/>
        <end position="26"/>
    </location>
    <ligand>
        <name>ATP</name>
        <dbReference type="ChEBI" id="CHEBI:30616"/>
    </ligand>
</feature>
<feature type="non-terminal residue">
    <location>
        <position position="1"/>
    </location>
</feature>
<feature type="non-terminal residue">
    <location>
        <position position="114"/>
    </location>
</feature>
<organism>
    <name type="scientific">Mycobacterium ulcerans</name>
    <dbReference type="NCBI Taxonomy" id="1809"/>
    <lineage>
        <taxon>Bacteria</taxon>
        <taxon>Bacillati</taxon>
        <taxon>Actinomycetota</taxon>
        <taxon>Actinomycetes</taxon>
        <taxon>Mycobacteriales</taxon>
        <taxon>Mycobacteriaceae</taxon>
        <taxon>Mycobacterium</taxon>
        <taxon>Mycobacterium ulcerans group</taxon>
    </lineage>
</organism>
<accession>Q50826</accession>
<protein>
    <recommendedName>
        <fullName evidence="1">Chaperonin GroEL</fullName>
        <ecNumber evidence="1">5.6.1.7</ecNumber>
    </recommendedName>
    <alternativeName>
        <fullName evidence="1">60 kDa chaperonin</fullName>
    </alternativeName>
    <alternativeName>
        <fullName>65 kDa heat shock protein</fullName>
    </alternativeName>
    <alternativeName>
        <fullName evidence="1">Chaperonin-60</fullName>
        <shortName evidence="1">Cpn60</shortName>
    </alternativeName>
</protein>